<dbReference type="EC" id="3.6.5.2" evidence="3"/>
<dbReference type="EMBL" id="AB036693">
    <property type="protein sequence ID" value="BAA89542.1"/>
    <property type="molecule type" value="mRNA"/>
</dbReference>
<dbReference type="EMBL" id="AK313425">
    <property type="protein sequence ID" value="BAG36217.1"/>
    <property type="molecule type" value="mRNA"/>
</dbReference>
<dbReference type="EMBL" id="AL139228">
    <property type="status" value="NOT_ANNOTATED_CDS"/>
    <property type="molecule type" value="Genomic_DNA"/>
</dbReference>
<dbReference type="EMBL" id="BC093756">
    <property type="protein sequence ID" value="AAH93756.1"/>
    <property type="molecule type" value="mRNA"/>
</dbReference>
<dbReference type="EMBL" id="BC093758">
    <property type="protein sequence ID" value="AAH93758.1"/>
    <property type="molecule type" value="mRNA"/>
</dbReference>
<dbReference type="CCDS" id="CCDS14515.1"/>
<dbReference type="RefSeq" id="NP_057454.1">
    <property type="nucleotide sequence ID" value="NM_016370.4"/>
</dbReference>
<dbReference type="PDB" id="2OCB">
    <property type="method" value="X-ray"/>
    <property type="resolution" value="2.20 A"/>
    <property type="chains" value="A=2-180"/>
</dbReference>
<dbReference type="PDBsum" id="2OCB"/>
<dbReference type="SMR" id="Q9NP90"/>
<dbReference type="BioGRID" id="119382">
    <property type="interactions" value="25"/>
</dbReference>
<dbReference type="FunCoup" id="Q9NP90">
    <property type="interactions" value="657"/>
</dbReference>
<dbReference type="IntAct" id="Q9NP90">
    <property type="interactions" value="21"/>
</dbReference>
<dbReference type="STRING" id="9606.ENSP00000243298"/>
<dbReference type="iPTMnet" id="Q9NP90"/>
<dbReference type="PhosphoSitePlus" id="Q9NP90"/>
<dbReference type="BioMuta" id="RAB9B"/>
<dbReference type="DMDM" id="13124471"/>
<dbReference type="jPOST" id="Q9NP90"/>
<dbReference type="MassIVE" id="Q9NP90"/>
<dbReference type="PaxDb" id="9606-ENSP00000243298"/>
<dbReference type="PeptideAtlas" id="Q9NP90"/>
<dbReference type="ProteomicsDB" id="81933"/>
<dbReference type="Pumba" id="Q9NP90"/>
<dbReference type="Antibodypedia" id="29164">
    <property type="antibodies" value="89 antibodies from 27 providers"/>
</dbReference>
<dbReference type="DNASU" id="51209"/>
<dbReference type="Ensembl" id="ENST00000243298.3">
    <property type="protein sequence ID" value="ENSP00000243298.2"/>
    <property type="gene ID" value="ENSG00000123570.4"/>
</dbReference>
<dbReference type="GeneID" id="51209"/>
<dbReference type="KEGG" id="hsa:51209"/>
<dbReference type="MANE-Select" id="ENST00000243298.3">
    <property type="protein sequence ID" value="ENSP00000243298.2"/>
    <property type="RefSeq nucleotide sequence ID" value="NM_016370.4"/>
    <property type="RefSeq protein sequence ID" value="NP_057454.1"/>
</dbReference>
<dbReference type="UCSC" id="uc004ell.3">
    <property type="organism name" value="human"/>
</dbReference>
<dbReference type="AGR" id="HGNC:14090"/>
<dbReference type="CTD" id="51209"/>
<dbReference type="DisGeNET" id="51209"/>
<dbReference type="GeneCards" id="RAB9B"/>
<dbReference type="HGNC" id="HGNC:14090">
    <property type="gene designation" value="RAB9B"/>
</dbReference>
<dbReference type="HPA" id="ENSG00000123570">
    <property type="expression patterns" value="Tissue enhanced (heart)"/>
</dbReference>
<dbReference type="MalaCards" id="RAB9B"/>
<dbReference type="MIM" id="300285">
    <property type="type" value="gene"/>
</dbReference>
<dbReference type="neXtProt" id="NX_Q9NP90"/>
<dbReference type="OpenTargets" id="ENSG00000123570"/>
<dbReference type="PharmGKB" id="PA34153"/>
<dbReference type="VEuPathDB" id="HostDB:ENSG00000123570"/>
<dbReference type="eggNOG" id="KOG0394">
    <property type="taxonomic scope" value="Eukaryota"/>
</dbReference>
<dbReference type="GeneTree" id="ENSGT00940000160481"/>
<dbReference type="HOGENOM" id="CLU_041217_10_6_1"/>
<dbReference type="InParanoid" id="Q9NP90"/>
<dbReference type="OMA" id="AKAWCME"/>
<dbReference type="OrthoDB" id="1436450at2759"/>
<dbReference type="PAN-GO" id="Q9NP90">
    <property type="GO annotations" value="4 GO annotations based on evolutionary models"/>
</dbReference>
<dbReference type="PhylomeDB" id="Q9NP90"/>
<dbReference type="TreeFam" id="TF326442"/>
<dbReference type="PathwayCommons" id="Q9NP90"/>
<dbReference type="Reactome" id="R-HSA-6798695">
    <property type="pathway name" value="Neutrophil degranulation"/>
</dbReference>
<dbReference type="Reactome" id="R-HSA-6811440">
    <property type="pathway name" value="Retrograde transport at the Trans-Golgi-Network"/>
</dbReference>
<dbReference type="Reactome" id="R-HSA-8873719">
    <property type="pathway name" value="RAB geranylgeranylation"/>
</dbReference>
<dbReference type="Reactome" id="R-HSA-8876198">
    <property type="pathway name" value="RAB GEFs exchange GTP for GDP on RABs"/>
</dbReference>
<dbReference type="Reactome" id="R-HSA-9706019">
    <property type="pathway name" value="RHOBTB3 ATPase cycle"/>
</dbReference>
<dbReference type="SignaLink" id="Q9NP90"/>
<dbReference type="BioGRID-ORCS" id="51209">
    <property type="hits" value="10 hits in 767 CRISPR screens"/>
</dbReference>
<dbReference type="ChiTaRS" id="RAB9B">
    <property type="organism name" value="human"/>
</dbReference>
<dbReference type="EvolutionaryTrace" id="Q9NP90"/>
<dbReference type="GenomeRNAi" id="51209"/>
<dbReference type="Pharos" id="Q9NP90">
    <property type="development level" value="Tbio"/>
</dbReference>
<dbReference type="PRO" id="PR:Q9NP90"/>
<dbReference type="Proteomes" id="UP000005640">
    <property type="component" value="Chromosome X"/>
</dbReference>
<dbReference type="RNAct" id="Q9NP90">
    <property type="molecule type" value="protein"/>
</dbReference>
<dbReference type="Bgee" id="ENSG00000123570">
    <property type="expression patterns" value="Expressed in left ventricle myocardium and 151 other cell types or tissues"/>
</dbReference>
<dbReference type="GO" id="GO:0005829">
    <property type="term" value="C:cytosol"/>
    <property type="evidence" value="ECO:0000304"/>
    <property type="project" value="Reactome"/>
</dbReference>
<dbReference type="GO" id="GO:0005770">
    <property type="term" value="C:late endosome"/>
    <property type="evidence" value="ECO:0000318"/>
    <property type="project" value="GO_Central"/>
</dbReference>
<dbReference type="GO" id="GO:0005764">
    <property type="term" value="C:lysosome"/>
    <property type="evidence" value="ECO:0000318"/>
    <property type="project" value="GO_Central"/>
</dbReference>
<dbReference type="GO" id="GO:0045335">
    <property type="term" value="C:phagocytic vesicle"/>
    <property type="evidence" value="ECO:0000314"/>
    <property type="project" value="UniProtKB"/>
</dbReference>
<dbReference type="GO" id="GO:0030670">
    <property type="term" value="C:phagocytic vesicle membrane"/>
    <property type="evidence" value="ECO:0007669"/>
    <property type="project" value="UniProtKB-SubCell"/>
</dbReference>
<dbReference type="GO" id="GO:0005886">
    <property type="term" value="C:plasma membrane"/>
    <property type="evidence" value="ECO:0000304"/>
    <property type="project" value="Reactome"/>
</dbReference>
<dbReference type="GO" id="GO:0030667">
    <property type="term" value="C:secretory granule membrane"/>
    <property type="evidence" value="ECO:0000304"/>
    <property type="project" value="Reactome"/>
</dbReference>
<dbReference type="GO" id="GO:0003925">
    <property type="term" value="F:G protein activity"/>
    <property type="evidence" value="ECO:0000314"/>
    <property type="project" value="GO_Central"/>
</dbReference>
<dbReference type="GO" id="GO:0019003">
    <property type="term" value="F:GDP binding"/>
    <property type="evidence" value="ECO:0000314"/>
    <property type="project" value="UniProtKB"/>
</dbReference>
<dbReference type="GO" id="GO:0005525">
    <property type="term" value="F:GTP binding"/>
    <property type="evidence" value="ECO:0007669"/>
    <property type="project" value="UniProtKB-KW"/>
</dbReference>
<dbReference type="GO" id="GO:0042802">
    <property type="term" value="F:identical protein binding"/>
    <property type="evidence" value="ECO:0007669"/>
    <property type="project" value="Ensembl"/>
</dbReference>
<dbReference type="GO" id="GO:0015031">
    <property type="term" value="P:protein transport"/>
    <property type="evidence" value="ECO:0007669"/>
    <property type="project" value="UniProtKB-KW"/>
</dbReference>
<dbReference type="GO" id="GO:0032482">
    <property type="term" value="P:Rab protein signal transduction"/>
    <property type="evidence" value="ECO:0007669"/>
    <property type="project" value="InterPro"/>
</dbReference>
<dbReference type="GO" id="GO:0006898">
    <property type="term" value="P:receptor-mediated endocytosis"/>
    <property type="evidence" value="ECO:0000314"/>
    <property type="project" value="GO_Central"/>
</dbReference>
<dbReference type="GO" id="GO:0042147">
    <property type="term" value="P:retrograde transport, endosome to Golgi"/>
    <property type="evidence" value="ECO:0000318"/>
    <property type="project" value="GO_Central"/>
</dbReference>
<dbReference type="CDD" id="cd04116">
    <property type="entry name" value="Rab9"/>
    <property type="match status" value="1"/>
</dbReference>
<dbReference type="FunFam" id="3.40.50.300:FF:000360">
    <property type="entry name" value="RAB9B, member RAS oncogene family"/>
    <property type="match status" value="1"/>
</dbReference>
<dbReference type="Gene3D" id="3.40.50.300">
    <property type="entry name" value="P-loop containing nucleotide triphosphate hydrolases"/>
    <property type="match status" value="1"/>
</dbReference>
<dbReference type="InterPro" id="IPR027417">
    <property type="entry name" value="P-loop_NTPase"/>
</dbReference>
<dbReference type="InterPro" id="IPR041824">
    <property type="entry name" value="Rab9"/>
</dbReference>
<dbReference type="InterPro" id="IPR005225">
    <property type="entry name" value="Small_GTP-bd"/>
</dbReference>
<dbReference type="InterPro" id="IPR001806">
    <property type="entry name" value="Small_GTPase"/>
</dbReference>
<dbReference type="NCBIfam" id="TIGR00231">
    <property type="entry name" value="small_GTP"/>
    <property type="match status" value="1"/>
</dbReference>
<dbReference type="PANTHER" id="PTHR47981">
    <property type="entry name" value="RAB FAMILY"/>
    <property type="match status" value="1"/>
</dbReference>
<dbReference type="PANTHER" id="PTHR47981:SF17">
    <property type="entry name" value="RAS-RELATED PROTEIN RAB-9B"/>
    <property type="match status" value="1"/>
</dbReference>
<dbReference type="Pfam" id="PF00071">
    <property type="entry name" value="Ras"/>
    <property type="match status" value="1"/>
</dbReference>
<dbReference type="PRINTS" id="PR00449">
    <property type="entry name" value="RASTRNSFRMNG"/>
</dbReference>
<dbReference type="SMART" id="SM00175">
    <property type="entry name" value="RAB"/>
    <property type="match status" value="1"/>
</dbReference>
<dbReference type="SMART" id="SM00176">
    <property type="entry name" value="RAN"/>
    <property type="match status" value="1"/>
</dbReference>
<dbReference type="SMART" id="SM00173">
    <property type="entry name" value="RAS"/>
    <property type="match status" value="1"/>
</dbReference>
<dbReference type="SMART" id="SM00174">
    <property type="entry name" value="RHO"/>
    <property type="match status" value="1"/>
</dbReference>
<dbReference type="SUPFAM" id="SSF52540">
    <property type="entry name" value="P-loop containing nucleoside triphosphate hydrolases"/>
    <property type="match status" value="1"/>
</dbReference>
<dbReference type="PROSITE" id="PS51419">
    <property type="entry name" value="RAB"/>
    <property type="match status" value="1"/>
</dbReference>
<gene>
    <name evidence="13" type="primary">RAB9B</name>
    <name type="synonym">RAB9L</name>
</gene>
<comment type="function">
    <text evidence="2 3 9">The small GTPases Rab are key regulators of intracellular membrane trafficking, from the formation of transport vesicles to their fusion with membranes. Rabs cycle between an inactive GDP-bound form and an active GTP-bound form that is able to recruit to membranes different sets of downstream effectors directly responsible for vesicle formation, movement, tethering and fusion (By similarity). RAB9B is involved in the transport of proteins between the endosomes and the trans Golgi network (By similarity). May use NDE1/NDEL1 as an effector to interact with the dynein motor complex in order to control retrograde trafficking of RAB9-associated late endosomes to the TGN (PubMed:34793709).</text>
</comment>
<comment type="catalytic activity">
    <reaction evidence="3">
        <text>GTP + H2O = GDP + phosphate + H(+)</text>
        <dbReference type="Rhea" id="RHEA:19669"/>
        <dbReference type="ChEBI" id="CHEBI:15377"/>
        <dbReference type="ChEBI" id="CHEBI:15378"/>
        <dbReference type="ChEBI" id="CHEBI:37565"/>
        <dbReference type="ChEBI" id="CHEBI:43474"/>
        <dbReference type="ChEBI" id="CHEBI:58189"/>
        <dbReference type="EC" id="3.6.5.2"/>
    </reaction>
    <physiologicalReaction direction="left-to-right" evidence="3">
        <dbReference type="Rhea" id="RHEA:19670"/>
    </physiologicalReaction>
</comment>
<comment type="cofactor">
    <cofactor evidence="10">
        <name>Mg(2+)</name>
        <dbReference type="ChEBI" id="CHEBI:18420"/>
    </cofactor>
</comment>
<comment type="activity regulation">
    <text evidence="11">Regulated by guanine nucleotide exchange factors (GEFs) which promote the exchange of bound GDP for free GTP. Regulated by GTPase activating proteins (GAPs) which increase the GTP hydrolysis activity. Inhibited by GDP dissociation inhibitors (GDIs).</text>
</comment>
<comment type="subunit">
    <text evidence="6 8 9">Interacts (GTP-bound form) with SGSM1; the GDP-bound form has much lower affinity for SGSM1 (PubMed:22637480). The GTP-bound form but not the GDP-bound form interacts with HPS4 and the BLOC-3 complex (heterodimer of HPS1 and HPS4) but does not interact with HPS1 alone (PubMed:20048159). Interacts (GTP-bound form) with NDE1 (PubMed:34793709).</text>
</comment>
<comment type="subcellular location">
    <subcellularLocation>
        <location evidence="11">Cell membrane</location>
        <topology evidence="11">Lipid-anchor</topology>
        <orientation evidence="11">Cytoplasmic side</orientation>
    </subcellularLocation>
    <subcellularLocation>
        <location evidence="7">Cytoplasmic vesicle</location>
        <location evidence="7">Phagosome</location>
    </subcellularLocation>
    <subcellularLocation>
        <location evidence="1">Cytoplasmic vesicle</location>
        <location evidence="1">Phagosome membrane</location>
        <topology evidence="1">Lipid-anchor</topology>
        <orientation evidence="1">Cytoplasmic side</orientation>
    </subcellularLocation>
    <text>Recruited to phagosomes containing S.aureus or M.tuberculosis.</text>
</comment>
<comment type="tissue specificity">
    <text evidence="5">Ubiquitous.</text>
</comment>
<comment type="domain">
    <text evidence="2">Switch 1, switch 2 and the interswitch regions are characteristic of Rab GTPases and mediate the interactions with Rab downstream effectors. The switch regions undergo conformational changes upon nucleotide binding which drives interaction with specific sets of effector proteins, with most effectors only binding to GTP-bound Rab.</text>
</comment>
<comment type="similarity">
    <text evidence="11">Belongs to the small GTPase superfamily. Rab family.</text>
</comment>
<evidence type="ECO:0000250" key="1"/>
<evidence type="ECO:0000250" key="2">
    <source>
        <dbReference type="UniProtKB" id="P51151"/>
    </source>
</evidence>
<evidence type="ECO:0000250" key="3">
    <source>
        <dbReference type="UniProtKB" id="P62820"/>
    </source>
</evidence>
<evidence type="ECO:0000250" key="4">
    <source>
        <dbReference type="UniProtKB" id="Q8BHH2"/>
    </source>
</evidence>
<evidence type="ECO:0000269" key="5">
    <source>
    </source>
</evidence>
<evidence type="ECO:0000269" key="6">
    <source>
    </source>
</evidence>
<evidence type="ECO:0000269" key="7">
    <source>
    </source>
</evidence>
<evidence type="ECO:0000269" key="8">
    <source>
    </source>
</evidence>
<evidence type="ECO:0000269" key="9">
    <source>
    </source>
</evidence>
<evidence type="ECO:0000269" key="10">
    <source ref="9"/>
</evidence>
<evidence type="ECO:0000305" key="11"/>
<evidence type="ECO:0000305" key="12">
    <source ref="9"/>
</evidence>
<evidence type="ECO:0000312" key="13">
    <source>
        <dbReference type="HGNC" id="HGNC:14090"/>
    </source>
</evidence>
<evidence type="ECO:0007744" key="14">
    <source>
        <dbReference type="PDB" id="2OCB"/>
    </source>
</evidence>
<evidence type="ECO:0007829" key="15">
    <source>
        <dbReference type="PDB" id="2OCB"/>
    </source>
</evidence>
<accession>Q9NP90</accession>
<accession>B2R8M0</accession>
<accession>Q52LX2</accession>
<proteinExistence type="evidence at protein level"/>
<protein>
    <recommendedName>
        <fullName>Ras-related protein Rab-9B</fullName>
        <ecNumber evidence="3">3.6.5.2</ecNumber>
    </recommendedName>
    <alternativeName>
        <fullName>Rab-9-like protein</fullName>
        <shortName>Rab-9L</shortName>
    </alternativeName>
</protein>
<reference key="1">
    <citation type="journal article" date="2000" name="J. Hum. Genet.">
        <title>cDNA cloning of a new member of the Ras superfamily, RAB9-like, on the human chromosome Xq22.1-q22.3 region.</title>
        <authorList>
            <person name="Seki N."/>
            <person name="Azuma T."/>
            <person name="Yoshikawa T."/>
            <person name="Masuho Y."/>
            <person name="Muramatsu M."/>
            <person name="Saito T."/>
        </authorList>
    </citation>
    <scope>NUCLEOTIDE SEQUENCE [MRNA]</scope>
    <scope>TISSUE SPECIFICITY</scope>
</reference>
<reference key="2">
    <citation type="journal article" date="2004" name="Nat. Genet.">
        <title>Complete sequencing and characterization of 21,243 full-length human cDNAs.</title>
        <authorList>
            <person name="Ota T."/>
            <person name="Suzuki Y."/>
            <person name="Nishikawa T."/>
            <person name="Otsuki T."/>
            <person name="Sugiyama T."/>
            <person name="Irie R."/>
            <person name="Wakamatsu A."/>
            <person name="Hayashi K."/>
            <person name="Sato H."/>
            <person name="Nagai K."/>
            <person name="Kimura K."/>
            <person name="Makita H."/>
            <person name="Sekine M."/>
            <person name="Obayashi M."/>
            <person name="Nishi T."/>
            <person name="Shibahara T."/>
            <person name="Tanaka T."/>
            <person name="Ishii S."/>
            <person name="Yamamoto J."/>
            <person name="Saito K."/>
            <person name="Kawai Y."/>
            <person name="Isono Y."/>
            <person name="Nakamura Y."/>
            <person name="Nagahari K."/>
            <person name="Murakami K."/>
            <person name="Yasuda T."/>
            <person name="Iwayanagi T."/>
            <person name="Wagatsuma M."/>
            <person name="Shiratori A."/>
            <person name="Sudo H."/>
            <person name="Hosoiri T."/>
            <person name="Kaku Y."/>
            <person name="Kodaira H."/>
            <person name="Kondo H."/>
            <person name="Sugawara M."/>
            <person name="Takahashi M."/>
            <person name="Kanda K."/>
            <person name="Yokoi T."/>
            <person name="Furuya T."/>
            <person name="Kikkawa E."/>
            <person name="Omura Y."/>
            <person name="Abe K."/>
            <person name="Kamihara K."/>
            <person name="Katsuta N."/>
            <person name="Sato K."/>
            <person name="Tanikawa M."/>
            <person name="Yamazaki M."/>
            <person name="Ninomiya K."/>
            <person name="Ishibashi T."/>
            <person name="Yamashita H."/>
            <person name="Murakawa K."/>
            <person name="Fujimori K."/>
            <person name="Tanai H."/>
            <person name="Kimata M."/>
            <person name="Watanabe M."/>
            <person name="Hiraoka S."/>
            <person name="Chiba Y."/>
            <person name="Ishida S."/>
            <person name="Ono Y."/>
            <person name="Takiguchi S."/>
            <person name="Watanabe S."/>
            <person name="Yosida M."/>
            <person name="Hotuta T."/>
            <person name="Kusano J."/>
            <person name="Kanehori K."/>
            <person name="Takahashi-Fujii A."/>
            <person name="Hara H."/>
            <person name="Tanase T.-O."/>
            <person name="Nomura Y."/>
            <person name="Togiya S."/>
            <person name="Komai F."/>
            <person name="Hara R."/>
            <person name="Takeuchi K."/>
            <person name="Arita M."/>
            <person name="Imose N."/>
            <person name="Musashino K."/>
            <person name="Yuuki H."/>
            <person name="Oshima A."/>
            <person name="Sasaki N."/>
            <person name="Aotsuka S."/>
            <person name="Yoshikawa Y."/>
            <person name="Matsunawa H."/>
            <person name="Ichihara T."/>
            <person name="Shiohata N."/>
            <person name="Sano S."/>
            <person name="Moriya S."/>
            <person name="Momiyama H."/>
            <person name="Satoh N."/>
            <person name="Takami S."/>
            <person name="Terashima Y."/>
            <person name="Suzuki O."/>
            <person name="Nakagawa S."/>
            <person name="Senoh A."/>
            <person name="Mizoguchi H."/>
            <person name="Goto Y."/>
            <person name="Shimizu F."/>
            <person name="Wakebe H."/>
            <person name="Hishigaki H."/>
            <person name="Watanabe T."/>
            <person name="Sugiyama A."/>
            <person name="Takemoto M."/>
            <person name="Kawakami B."/>
            <person name="Yamazaki M."/>
            <person name="Watanabe K."/>
            <person name="Kumagai A."/>
            <person name="Itakura S."/>
            <person name="Fukuzumi Y."/>
            <person name="Fujimori Y."/>
            <person name="Komiyama M."/>
            <person name="Tashiro H."/>
            <person name="Tanigami A."/>
            <person name="Fujiwara T."/>
            <person name="Ono T."/>
            <person name="Yamada K."/>
            <person name="Fujii Y."/>
            <person name="Ozaki K."/>
            <person name="Hirao M."/>
            <person name="Ohmori Y."/>
            <person name="Kawabata A."/>
            <person name="Hikiji T."/>
            <person name="Kobatake N."/>
            <person name="Inagaki H."/>
            <person name="Ikema Y."/>
            <person name="Okamoto S."/>
            <person name="Okitani R."/>
            <person name="Kawakami T."/>
            <person name="Noguchi S."/>
            <person name="Itoh T."/>
            <person name="Shigeta K."/>
            <person name="Senba T."/>
            <person name="Matsumura K."/>
            <person name="Nakajima Y."/>
            <person name="Mizuno T."/>
            <person name="Morinaga M."/>
            <person name="Sasaki M."/>
            <person name="Togashi T."/>
            <person name="Oyama M."/>
            <person name="Hata H."/>
            <person name="Watanabe M."/>
            <person name="Komatsu T."/>
            <person name="Mizushima-Sugano J."/>
            <person name="Satoh T."/>
            <person name="Shirai Y."/>
            <person name="Takahashi Y."/>
            <person name="Nakagawa K."/>
            <person name="Okumura K."/>
            <person name="Nagase T."/>
            <person name="Nomura N."/>
            <person name="Kikuchi H."/>
            <person name="Masuho Y."/>
            <person name="Yamashita R."/>
            <person name="Nakai K."/>
            <person name="Yada T."/>
            <person name="Nakamura Y."/>
            <person name="Ohara O."/>
            <person name="Isogai T."/>
            <person name="Sugano S."/>
        </authorList>
    </citation>
    <scope>NUCLEOTIDE SEQUENCE [LARGE SCALE MRNA]</scope>
    <source>
        <tissue>Cerebellum</tissue>
    </source>
</reference>
<reference key="3">
    <citation type="journal article" date="2005" name="Nature">
        <title>The DNA sequence of the human X chromosome.</title>
        <authorList>
            <person name="Ross M.T."/>
            <person name="Grafham D.V."/>
            <person name="Coffey A.J."/>
            <person name="Scherer S."/>
            <person name="McLay K."/>
            <person name="Muzny D."/>
            <person name="Platzer M."/>
            <person name="Howell G.R."/>
            <person name="Burrows C."/>
            <person name="Bird C.P."/>
            <person name="Frankish A."/>
            <person name="Lovell F.L."/>
            <person name="Howe K.L."/>
            <person name="Ashurst J.L."/>
            <person name="Fulton R.S."/>
            <person name="Sudbrak R."/>
            <person name="Wen G."/>
            <person name="Jones M.C."/>
            <person name="Hurles M.E."/>
            <person name="Andrews T.D."/>
            <person name="Scott C.E."/>
            <person name="Searle S."/>
            <person name="Ramser J."/>
            <person name="Whittaker A."/>
            <person name="Deadman R."/>
            <person name="Carter N.P."/>
            <person name="Hunt S.E."/>
            <person name="Chen R."/>
            <person name="Cree A."/>
            <person name="Gunaratne P."/>
            <person name="Havlak P."/>
            <person name="Hodgson A."/>
            <person name="Metzker M.L."/>
            <person name="Richards S."/>
            <person name="Scott G."/>
            <person name="Steffen D."/>
            <person name="Sodergren E."/>
            <person name="Wheeler D.A."/>
            <person name="Worley K.C."/>
            <person name="Ainscough R."/>
            <person name="Ambrose K.D."/>
            <person name="Ansari-Lari M.A."/>
            <person name="Aradhya S."/>
            <person name="Ashwell R.I."/>
            <person name="Babbage A.K."/>
            <person name="Bagguley C.L."/>
            <person name="Ballabio A."/>
            <person name="Banerjee R."/>
            <person name="Barker G.E."/>
            <person name="Barlow K.F."/>
            <person name="Barrett I.P."/>
            <person name="Bates K.N."/>
            <person name="Beare D.M."/>
            <person name="Beasley H."/>
            <person name="Beasley O."/>
            <person name="Beck A."/>
            <person name="Bethel G."/>
            <person name="Blechschmidt K."/>
            <person name="Brady N."/>
            <person name="Bray-Allen S."/>
            <person name="Bridgeman A.M."/>
            <person name="Brown A.J."/>
            <person name="Brown M.J."/>
            <person name="Bonnin D."/>
            <person name="Bruford E.A."/>
            <person name="Buhay C."/>
            <person name="Burch P."/>
            <person name="Burford D."/>
            <person name="Burgess J."/>
            <person name="Burrill W."/>
            <person name="Burton J."/>
            <person name="Bye J.M."/>
            <person name="Carder C."/>
            <person name="Carrel L."/>
            <person name="Chako J."/>
            <person name="Chapman J.C."/>
            <person name="Chavez D."/>
            <person name="Chen E."/>
            <person name="Chen G."/>
            <person name="Chen Y."/>
            <person name="Chen Z."/>
            <person name="Chinault C."/>
            <person name="Ciccodicola A."/>
            <person name="Clark S.Y."/>
            <person name="Clarke G."/>
            <person name="Clee C.M."/>
            <person name="Clegg S."/>
            <person name="Clerc-Blankenburg K."/>
            <person name="Clifford K."/>
            <person name="Cobley V."/>
            <person name="Cole C.G."/>
            <person name="Conquer J.S."/>
            <person name="Corby N."/>
            <person name="Connor R.E."/>
            <person name="David R."/>
            <person name="Davies J."/>
            <person name="Davis C."/>
            <person name="Davis J."/>
            <person name="Delgado O."/>
            <person name="Deshazo D."/>
            <person name="Dhami P."/>
            <person name="Ding Y."/>
            <person name="Dinh H."/>
            <person name="Dodsworth S."/>
            <person name="Draper H."/>
            <person name="Dugan-Rocha S."/>
            <person name="Dunham A."/>
            <person name="Dunn M."/>
            <person name="Durbin K.J."/>
            <person name="Dutta I."/>
            <person name="Eades T."/>
            <person name="Ellwood M."/>
            <person name="Emery-Cohen A."/>
            <person name="Errington H."/>
            <person name="Evans K.L."/>
            <person name="Faulkner L."/>
            <person name="Francis F."/>
            <person name="Frankland J."/>
            <person name="Fraser A.E."/>
            <person name="Galgoczy P."/>
            <person name="Gilbert J."/>
            <person name="Gill R."/>
            <person name="Gloeckner G."/>
            <person name="Gregory S.G."/>
            <person name="Gribble S."/>
            <person name="Griffiths C."/>
            <person name="Grocock R."/>
            <person name="Gu Y."/>
            <person name="Gwilliam R."/>
            <person name="Hamilton C."/>
            <person name="Hart E.A."/>
            <person name="Hawes A."/>
            <person name="Heath P.D."/>
            <person name="Heitmann K."/>
            <person name="Hennig S."/>
            <person name="Hernandez J."/>
            <person name="Hinzmann B."/>
            <person name="Ho S."/>
            <person name="Hoffs M."/>
            <person name="Howden P.J."/>
            <person name="Huckle E.J."/>
            <person name="Hume J."/>
            <person name="Hunt P.J."/>
            <person name="Hunt A.R."/>
            <person name="Isherwood J."/>
            <person name="Jacob L."/>
            <person name="Johnson D."/>
            <person name="Jones S."/>
            <person name="de Jong P.J."/>
            <person name="Joseph S.S."/>
            <person name="Keenan S."/>
            <person name="Kelly S."/>
            <person name="Kershaw J.K."/>
            <person name="Khan Z."/>
            <person name="Kioschis P."/>
            <person name="Klages S."/>
            <person name="Knights A.J."/>
            <person name="Kosiura A."/>
            <person name="Kovar-Smith C."/>
            <person name="Laird G.K."/>
            <person name="Langford C."/>
            <person name="Lawlor S."/>
            <person name="Leversha M."/>
            <person name="Lewis L."/>
            <person name="Liu W."/>
            <person name="Lloyd C."/>
            <person name="Lloyd D.M."/>
            <person name="Loulseged H."/>
            <person name="Loveland J.E."/>
            <person name="Lovell J.D."/>
            <person name="Lozado R."/>
            <person name="Lu J."/>
            <person name="Lyne R."/>
            <person name="Ma J."/>
            <person name="Maheshwari M."/>
            <person name="Matthews L.H."/>
            <person name="McDowall J."/>
            <person name="McLaren S."/>
            <person name="McMurray A."/>
            <person name="Meidl P."/>
            <person name="Meitinger T."/>
            <person name="Milne S."/>
            <person name="Miner G."/>
            <person name="Mistry S.L."/>
            <person name="Morgan M."/>
            <person name="Morris S."/>
            <person name="Mueller I."/>
            <person name="Mullikin J.C."/>
            <person name="Nguyen N."/>
            <person name="Nordsiek G."/>
            <person name="Nyakatura G."/>
            <person name="O'dell C.N."/>
            <person name="Okwuonu G."/>
            <person name="Palmer S."/>
            <person name="Pandian R."/>
            <person name="Parker D."/>
            <person name="Parrish J."/>
            <person name="Pasternak S."/>
            <person name="Patel D."/>
            <person name="Pearce A.V."/>
            <person name="Pearson D.M."/>
            <person name="Pelan S.E."/>
            <person name="Perez L."/>
            <person name="Porter K.M."/>
            <person name="Ramsey Y."/>
            <person name="Reichwald K."/>
            <person name="Rhodes S."/>
            <person name="Ridler K.A."/>
            <person name="Schlessinger D."/>
            <person name="Schueler M.G."/>
            <person name="Sehra H.K."/>
            <person name="Shaw-Smith C."/>
            <person name="Shen H."/>
            <person name="Sheridan E.M."/>
            <person name="Shownkeen R."/>
            <person name="Skuce C.D."/>
            <person name="Smith M.L."/>
            <person name="Sotheran E.C."/>
            <person name="Steingruber H.E."/>
            <person name="Steward C.A."/>
            <person name="Storey R."/>
            <person name="Swann R.M."/>
            <person name="Swarbreck D."/>
            <person name="Tabor P.E."/>
            <person name="Taudien S."/>
            <person name="Taylor T."/>
            <person name="Teague B."/>
            <person name="Thomas K."/>
            <person name="Thorpe A."/>
            <person name="Timms K."/>
            <person name="Tracey A."/>
            <person name="Trevanion S."/>
            <person name="Tromans A.C."/>
            <person name="d'Urso M."/>
            <person name="Verduzco D."/>
            <person name="Villasana D."/>
            <person name="Waldron L."/>
            <person name="Wall M."/>
            <person name="Wang Q."/>
            <person name="Warren J."/>
            <person name="Warry G.L."/>
            <person name="Wei X."/>
            <person name="West A."/>
            <person name="Whitehead S.L."/>
            <person name="Whiteley M.N."/>
            <person name="Wilkinson J.E."/>
            <person name="Willey D.L."/>
            <person name="Williams G."/>
            <person name="Williams L."/>
            <person name="Williamson A."/>
            <person name="Williamson H."/>
            <person name="Wilming L."/>
            <person name="Woodmansey R.L."/>
            <person name="Wray P.W."/>
            <person name="Yen J."/>
            <person name="Zhang J."/>
            <person name="Zhou J."/>
            <person name="Zoghbi H."/>
            <person name="Zorilla S."/>
            <person name="Buck D."/>
            <person name="Reinhardt R."/>
            <person name="Poustka A."/>
            <person name="Rosenthal A."/>
            <person name="Lehrach H."/>
            <person name="Meindl A."/>
            <person name="Minx P.J."/>
            <person name="Hillier L.W."/>
            <person name="Willard H.F."/>
            <person name="Wilson R.K."/>
            <person name="Waterston R.H."/>
            <person name="Rice C.M."/>
            <person name="Vaudin M."/>
            <person name="Coulson A."/>
            <person name="Nelson D.L."/>
            <person name="Weinstock G."/>
            <person name="Sulston J.E."/>
            <person name="Durbin R.M."/>
            <person name="Hubbard T."/>
            <person name="Gibbs R.A."/>
            <person name="Beck S."/>
            <person name="Rogers J."/>
            <person name="Bentley D.R."/>
        </authorList>
    </citation>
    <scope>NUCLEOTIDE SEQUENCE [LARGE SCALE GENOMIC DNA]</scope>
</reference>
<reference key="4">
    <citation type="journal article" date="2004" name="Genome Res.">
        <title>The status, quality, and expansion of the NIH full-length cDNA project: the Mammalian Gene Collection (MGC).</title>
        <authorList>
            <consortium name="The MGC Project Team"/>
        </authorList>
    </citation>
    <scope>NUCLEOTIDE SEQUENCE [LARGE SCALE MRNA]</scope>
    <source>
        <tissue>Brain</tissue>
    </source>
</reference>
<reference key="5">
    <citation type="journal article" date="2010" name="J. Biol. Chem.">
        <title>Assembly of the biogenesis of lysosome-related organelles complex-3 (BLOC-3) and its interaction with Rab9.</title>
        <authorList>
            <person name="Kloer D.P."/>
            <person name="Rojas R."/>
            <person name="Ivan V."/>
            <person name="Moriyama K."/>
            <person name="van Vlijmen T."/>
            <person name="Murthy N."/>
            <person name="Ghirlando R."/>
            <person name="van der Sluijs P."/>
            <person name="Hurley J.H."/>
            <person name="Bonifacino J.S."/>
        </authorList>
    </citation>
    <scope>INTERACTION WITH HPS4 AND BLOC-3 COMPLEX</scope>
    <scope>ABSENCE OF INTERACTION WITH HPS1</scope>
</reference>
<reference key="6">
    <citation type="journal article" date="2011" name="Traffic">
        <title>Rab GTPases regulating phagosome maturation are differentially recruited to mycobacterial phagosomes.</title>
        <authorList>
            <person name="Seto S."/>
            <person name="Tsujimura K."/>
            <person name="Koide Y."/>
        </authorList>
    </citation>
    <scope>SUBCELLULAR LOCATION</scope>
</reference>
<reference key="7">
    <citation type="journal article" date="2012" name="J. Biol. Chem.">
        <title>RUTBC2 protein, a Rab9A effector and GTPase-activating protein for Rab36.</title>
        <authorList>
            <person name="Nottingham R.M."/>
            <person name="Pusapati G.V."/>
            <person name="Ganley I.G."/>
            <person name="Barr F.A."/>
            <person name="Lambright D.G."/>
            <person name="Pfeffer S.R."/>
        </authorList>
    </citation>
    <scope>INTERACTION WITH SGSM1</scope>
</reference>
<reference key="8">
    <citation type="journal article" date="2022" name="Structure">
        <title>Nde1 is a Rab9 effector for loading late endosomes to cytoplasmic dynein motor complex.</title>
        <authorList>
            <person name="Zhang Y."/>
            <person name="Chen Z."/>
            <person name="Wang F."/>
            <person name="Sun H."/>
            <person name="Zhu X."/>
            <person name="Ding J."/>
            <person name="Zhang T."/>
        </authorList>
    </citation>
    <scope>INTERACTION WITH NDE1</scope>
</reference>
<reference key="9">
    <citation type="submission" date="2009-02" db="PDB data bank">
        <title>Crystal structure of human RAB9B in complex with a GTP analogue.</title>
        <authorList>
            <consortium name="Structural genomics consortium (SGC)"/>
        </authorList>
    </citation>
    <scope>X-RAY CRYSTALLOGRAPHY (2.2 ANGSTROMS) OF 2-180 IN COMPLEX WITH MG(2+) AND GTP ANALOG</scope>
    <scope>COFACTOR</scope>
</reference>
<keyword id="KW-0002">3D-structure</keyword>
<keyword id="KW-1003">Cell membrane</keyword>
<keyword id="KW-0968">Cytoplasmic vesicle</keyword>
<keyword id="KW-0342">GTP-binding</keyword>
<keyword id="KW-0378">Hydrolase</keyword>
<keyword id="KW-0449">Lipoprotein</keyword>
<keyword id="KW-0472">Membrane</keyword>
<keyword id="KW-0547">Nucleotide-binding</keyword>
<keyword id="KW-0597">Phosphoprotein</keyword>
<keyword id="KW-0636">Prenylation</keyword>
<keyword id="KW-0653">Protein transport</keyword>
<keyword id="KW-1267">Proteomics identification</keyword>
<keyword id="KW-1185">Reference proteome</keyword>
<keyword id="KW-0813">Transport</keyword>
<organism>
    <name type="scientific">Homo sapiens</name>
    <name type="common">Human</name>
    <dbReference type="NCBI Taxonomy" id="9606"/>
    <lineage>
        <taxon>Eukaryota</taxon>
        <taxon>Metazoa</taxon>
        <taxon>Chordata</taxon>
        <taxon>Craniata</taxon>
        <taxon>Vertebrata</taxon>
        <taxon>Euteleostomi</taxon>
        <taxon>Mammalia</taxon>
        <taxon>Eutheria</taxon>
        <taxon>Euarchontoglires</taxon>
        <taxon>Primates</taxon>
        <taxon>Haplorrhini</taxon>
        <taxon>Catarrhini</taxon>
        <taxon>Hominidae</taxon>
        <taxon>Homo</taxon>
    </lineage>
</organism>
<name>RAB9B_HUMAN</name>
<sequence length="201" mass="22719">MSGKSLLLKVILLGDGGVGKSSLMNRYVTNKFDSQAFHTIGVEFLNRDLEVDGRFVTLQIWDTAGQERFKSLRTPFYRGADCCLLTFSVDDRQSFENLGNWQKEFIYYADVKDPEHFPFVVLGNKVDKEDRQVTTEEAQTWCMENGDYPYLETSAKDDTNVTVAFEEAVRQVLAVEEQLEHCMLGHTIDLNSGSKAGSSCC</sequence>
<feature type="chain" id="PRO_0000121142" description="Ras-related protein Rab-9B">
    <location>
        <begin position="1"/>
        <end position="201"/>
    </location>
</feature>
<feature type="short sequence motif" description="Switch 1" evidence="2">
    <location>
        <begin position="31"/>
        <end position="42"/>
    </location>
</feature>
<feature type="short sequence motif" description="Switch 2" evidence="2">
    <location>
        <begin position="64"/>
        <end position="78"/>
    </location>
</feature>
<feature type="binding site" evidence="12 14">
    <location>
        <position position="18"/>
    </location>
    <ligand>
        <name>GTP</name>
        <dbReference type="ChEBI" id="CHEBI:37565"/>
    </ligand>
</feature>
<feature type="binding site" evidence="12 14">
    <location>
        <position position="19"/>
    </location>
    <ligand>
        <name>GTP</name>
        <dbReference type="ChEBI" id="CHEBI:37565"/>
    </ligand>
</feature>
<feature type="binding site" evidence="12 14">
    <location>
        <position position="20"/>
    </location>
    <ligand>
        <name>GTP</name>
        <dbReference type="ChEBI" id="CHEBI:37565"/>
    </ligand>
</feature>
<feature type="binding site" evidence="12 14">
    <location>
        <position position="21"/>
    </location>
    <ligand>
        <name>GTP</name>
        <dbReference type="ChEBI" id="CHEBI:37565"/>
    </ligand>
</feature>
<feature type="binding site" evidence="10 14">
    <location>
        <position position="21"/>
    </location>
    <ligand>
        <name>Mg(2+)</name>
        <dbReference type="ChEBI" id="CHEBI:18420"/>
    </ligand>
</feature>
<feature type="binding site" evidence="12 14">
    <location>
        <position position="22"/>
    </location>
    <ligand>
        <name>GTP</name>
        <dbReference type="ChEBI" id="CHEBI:37565"/>
    </ligand>
</feature>
<feature type="binding site" evidence="12 14">
    <location>
        <position position="33"/>
    </location>
    <ligand>
        <name>GTP</name>
        <dbReference type="ChEBI" id="CHEBI:37565"/>
    </ligand>
</feature>
<feature type="binding site" evidence="12 14">
    <location>
        <position position="34"/>
    </location>
    <ligand>
        <name>GTP</name>
        <dbReference type="ChEBI" id="CHEBI:37565"/>
    </ligand>
</feature>
<feature type="binding site" evidence="12 14">
    <location>
        <position position="36"/>
    </location>
    <ligand>
        <name>GTP</name>
        <dbReference type="ChEBI" id="CHEBI:37565"/>
    </ligand>
</feature>
<feature type="binding site" evidence="12 14">
    <location>
        <position position="38"/>
    </location>
    <ligand>
        <name>GTP</name>
        <dbReference type="ChEBI" id="CHEBI:37565"/>
    </ligand>
</feature>
<feature type="binding site" evidence="12 14">
    <location>
        <position position="39"/>
    </location>
    <ligand>
        <name>GTP</name>
        <dbReference type="ChEBI" id="CHEBI:37565"/>
    </ligand>
</feature>
<feature type="binding site" evidence="10 14">
    <location>
        <position position="39"/>
    </location>
    <ligand>
        <name>Mg(2+)</name>
        <dbReference type="ChEBI" id="CHEBI:18420"/>
    </ligand>
</feature>
<feature type="binding site" evidence="10 14">
    <location>
        <position position="62"/>
    </location>
    <ligand>
        <name>Mg(2+)</name>
        <dbReference type="ChEBI" id="CHEBI:18420"/>
    </ligand>
</feature>
<feature type="binding site" evidence="12 14">
    <location>
        <position position="65"/>
    </location>
    <ligand>
        <name>GTP</name>
        <dbReference type="ChEBI" id="CHEBI:37565"/>
    </ligand>
</feature>
<feature type="binding site" evidence="12 14">
    <location>
        <position position="124"/>
    </location>
    <ligand>
        <name>GTP</name>
        <dbReference type="ChEBI" id="CHEBI:37565"/>
    </ligand>
</feature>
<feature type="binding site" evidence="12 14">
    <location>
        <position position="125"/>
    </location>
    <ligand>
        <name>GTP</name>
        <dbReference type="ChEBI" id="CHEBI:37565"/>
    </ligand>
</feature>
<feature type="binding site" evidence="12 14">
    <location>
        <position position="155"/>
    </location>
    <ligand>
        <name>GTP</name>
        <dbReference type="ChEBI" id="CHEBI:37565"/>
    </ligand>
</feature>
<feature type="binding site" evidence="12 14">
    <location>
        <position position="156"/>
    </location>
    <ligand>
        <name>GTP</name>
        <dbReference type="ChEBI" id="CHEBI:37565"/>
    </ligand>
</feature>
<feature type="modified residue" description="Phosphoserine" evidence="4">
    <location>
        <position position="34"/>
    </location>
</feature>
<feature type="lipid moiety-binding region" description="S-geranylgeranyl cysteine" evidence="1">
    <location>
        <position position="200"/>
    </location>
</feature>
<feature type="lipid moiety-binding region" description="S-geranylgeranyl cysteine" evidence="1">
    <location>
        <position position="201"/>
    </location>
</feature>
<feature type="strand" evidence="15">
    <location>
        <begin position="6"/>
        <end position="13"/>
    </location>
</feature>
<feature type="helix" evidence="15">
    <location>
        <begin position="20"/>
        <end position="29"/>
    </location>
</feature>
<feature type="strand" evidence="15">
    <location>
        <begin position="41"/>
        <end position="53"/>
    </location>
</feature>
<feature type="strand" evidence="15">
    <location>
        <begin position="55"/>
        <end position="63"/>
    </location>
</feature>
<feature type="helix" evidence="15">
    <location>
        <begin position="67"/>
        <end position="69"/>
    </location>
</feature>
<feature type="helix" evidence="15">
    <location>
        <begin position="70"/>
        <end position="73"/>
    </location>
</feature>
<feature type="helix" evidence="15">
    <location>
        <begin position="74"/>
        <end position="76"/>
    </location>
</feature>
<feature type="strand" evidence="15">
    <location>
        <begin position="81"/>
        <end position="88"/>
    </location>
</feature>
<feature type="helix" evidence="15">
    <location>
        <begin position="92"/>
        <end position="96"/>
    </location>
</feature>
<feature type="helix" evidence="15">
    <location>
        <begin position="98"/>
        <end position="108"/>
    </location>
</feature>
<feature type="turn" evidence="15">
    <location>
        <begin position="114"/>
        <end position="116"/>
    </location>
</feature>
<feature type="strand" evidence="15">
    <location>
        <begin position="119"/>
        <end position="124"/>
    </location>
</feature>
<feature type="helix" evidence="15">
    <location>
        <begin position="135"/>
        <end position="144"/>
    </location>
</feature>
<feature type="strand" evidence="15">
    <location>
        <begin position="150"/>
        <end position="152"/>
    </location>
</feature>
<feature type="turn" evidence="15">
    <location>
        <begin position="155"/>
        <end position="158"/>
    </location>
</feature>
<feature type="helix" evidence="15">
    <location>
        <begin position="161"/>
        <end position="173"/>
    </location>
</feature>